<gene>
    <name evidence="1" type="primary">acpS</name>
    <name type="ordered locus">BAbS19_I06360</name>
</gene>
<proteinExistence type="inferred from homology"/>
<organism>
    <name type="scientific">Brucella abortus (strain S19)</name>
    <dbReference type="NCBI Taxonomy" id="430066"/>
    <lineage>
        <taxon>Bacteria</taxon>
        <taxon>Pseudomonadati</taxon>
        <taxon>Pseudomonadota</taxon>
        <taxon>Alphaproteobacteria</taxon>
        <taxon>Hyphomicrobiales</taxon>
        <taxon>Brucellaceae</taxon>
        <taxon>Brucella/Ochrobactrum group</taxon>
        <taxon>Brucella</taxon>
    </lineage>
</organism>
<sequence length="134" mass="14645">MIVGIGSDLIDIRRVEKTLERHGSRFRDRVFTEIEQRKSEGRKQRAASYAKRFAAKEACAKALGTGIAEGVFWRDMGVVNTPSGKPTMHLTGGAAKQLQKLLPAGTNAAIHLTITDDFPLAQAFVIIEALPVLE</sequence>
<comment type="function">
    <text evidence="1">Transfers the 4'-phosphopantetheine moiety from coenzyme A to a Ser of acyl-carrier-protein.</text>
</comment>
<comment type="catalytic activity">
    <reaction evidence="1">
        <text>apo-[ACP] + CoA = holo-[ACP] + adenosine 3',5'-bisphosphate + H(+)</text>
        <dbReference type="Rhea" id="RHEA:12068"/>
        <dbReference type="Rhea" id="RHEA-COMP:9685"/>
        <dbReference type="Rhea" id="RHEA-COMP:9690"/>
        <dbReference type="ChEBI" id="CHEBI:15378"/>
        <dbReference type="ChEBI" id="CHEBI:29999"/>
        <dbReference type="ChEBI" id="CHEBI:57287"/>
        <dbReference type="ChEBI" id="CHEBI:58343"/>
        <dbReference type="ChEBI" id="CHEBI:64479"/>
        <dbReference type="EC" id="2.7.8.7"/>
    </reaction>
</comment>
<comment type="cofactor">
    <cofactor evidence="1">
        <name>Mg(2+)</name>
        <dbReference type="ChEBI" id="CHEBI:18420"/>
    </cofactor>
</comment>
<comment type="subcellular location">
    <subcellularLocation>
        <location evidence="1">Cytoplasm</location>
    </subcellularLocation>
</comment>
<comment type="similarity">
    <text evidence="1">Belongs to the P-Pant transferase superfamily. AcpS family.</text>
</comment>
<evidence type="ECO:0000255" key="1">
    <source>
        <dbReference type="HAMAP-Rule" id="MF_00101"/>
    </source>
</evidence>
<feature type="chain" id="PRO_1000093857" description="Holo-[acyl-carrier-protein] synthase">
    <location>
        <begin position="1"/>
        <end position="134"/>
    </location>
</feature>
<feature type="binding site" evidence="1">
    <location>
        <position position="8"/>
    </location>
    <ligand>
        <name>Mg(2+)</name>
        <dbReference type="ChEBI" id="CHEBI:18420"/>
    </ligand>
</feature>
<feature type="binding site" evidence="1">
    <location>
        <position position="57"/>
    </location>
    <ligand>
        <name>Mg(2+)</name>
        <dbReference type="ChEBI" id="CHEBI:18420"/>
    </ligand>
</feature>
<accession>B2SAD7</accession>
<protein>
    <recommendedName>
        <fullName evidence="1">Holo-[acyl-carrier-protein] synthase</fullName>
        <shortName evidence="1">Holo-ACP synthase</shortName>
        <ecNumber evidence="1">2.7.8.7</ecNumber>
    </recommendedName>
    <alternativeName>
        <fullName evidence="1">4'-phosphopantetheinyl transferase AcpS</fullName>
    </alternativeName>
</protein>
<name>ACPS_BRUA1</name>
<dbReference type="EC" id="2.7.8.7" evidence="1"/>
<dbReference type="EMBL" id="CP000887">
    <property type="protein sequence ID" value="ACD72167.1"/>
    <property type="molecule type" value="Genomic_DNA"/>
</dbReference>
<dbReference type="RefSeq" id="WP_002963803.1">
    <property type="nucleotide sequence ID" value="NC_010742.1"/>
</dbReference>
<dbReference type="SMR" id="B2SAD7"/>
<dbReference type="GeneID" id="97534013"/>
<dbReference type="KEGG" id="bmc:BAbS19_I06360"/>
<dbReference type="HOGENOM" id="CLU_089696_0_2_5"/>
<dbReference type="Proteomes" id="UP000002565">
    <property type="component" value="Chromosome 1"/>
</dbReference>
<dbReference type="GO" id="GO:0005737">
    <property type="term" value="C:cytoplasm"/>
    <property type="evidence" value="ECO:0007669"/>
    <property type="project" value="UniProtKB-SubCell"/>
</dbReference>
<dbReference type="GO" id="GO:0008897">
    <property type="term" value="F:holo-[acyl-carrier-protein] synthase activity"/>
    <property type="evidence" value="ECO:0007669"/>
    <property type="project" value="UniProtKB-UniRule"/>
</dbReference>
<dbReference type="GO" id="GO:0000287">
    <property type="term" value="F:magnesium ion binding"/>
    <property type="evidence" value="ECO:0007669"/>
    <property type="project" value="UniProtKB-UniRule"/>
</dbReference>
<dbReference type="GO" id="GO:0006633">
    <property type="term" value="P:fatty acid biosynthetic process"/>
    <property type="evidence" value="ECO:0007669"/>
    <property type="project" value="UniProtKB-UniRule"/>
</dbReference>
<dbReference type="Gene3D" id="3.90.470.20">
    <property type="entry name" value="4'-phosphopantetheinyl transferase domain"/>
    <property type="match status" value="1"/>
</dbReference>
<dbReference type="HAMAP" id="MF_00101">
    <property type="entry name" value="AcpS"/>
    <property type="match status" value="1"/>
</dbReference>
<dbReference type="InterPro" id="IPR008278">
    <property type="entry name" value="4-PPantetheinyl_Trfase_dom"/>
</dbReference>
<dbReference type="InterPro" id="IPR037143">
    <property type="entry name" value="4-PPantetheinyl_Trfase_dom_sf"/>
</dbReference>
<dbReference type="InterPro" id="IPR002582">
    <property type="entry name" value="ACPS"/>
</dbReference>
<dbReference type="InterPro" id="IPR004568">
    <property type="entry name" value="Ppantetheine-prot_Trfase_dom"/>
</dbReference>
<dbReference type="NCBIfam" id="TIGR00516">
    <property type="entry name" value="acpS"/>
    <property type="match status" value="1"/>
</dbReference>
<dbReference type="NCBIfam" id="TIGR00556">
    <property type="entry name" value="pantethn_trn"/>
    <property type="match status" value="1"/>
</dbReference>
<dbReference type="Pfam" id="PF01648">
    <property type="entry name" value="ACPS"/>
    <property type="match status" value="1"/>
</dbReference>
<dbReference type="SUPFAM" id="SSF56214">
    <property type="entry name" value="4'-phosphopantetheinyl transferase"/>
    <property type="match status" value="1"/>
</dbReference>
<keyword id="KW-0963">Cytoplasm</keyword>
<keyword id="KW-0275">Fatty acid biosynthesis</keyword>
<keyword id="KW-0276">Fatty acid metabolism</keyword>
<keyword id="KW-0444">Lipid biosynthesis</keyword>
<keyword id="KW-0443">Lipid metabolism</keyword>
<keyword id="KW-0460">Magnesium</keyword>
<keyword id="KW-0479">Metal-binding</keyword>
<keyword id="KW-0808">Transferase</keyword>
<reference key="1">
    <citation type="journal article" date="2008" name="PLoS ONE">
        <title>Genome sequence of Brucella abortus vaccine strain S19 compared to virulent strains yields candidate virulence genes.</title>
        <authorList>
            <person name="Crasta O.R."/>
            <person name="Folkerts O."/>
            <person name="Fei Z."/>
            <person name="Mane S.P."/>
            <person name="Evans C."/>
            <person name="Martino-Catt S."/>
            <person name="Bricker B."/>
            <person name="Yu G."/>
            <person name="Du L."/>
            <person name="Sobral B.W."/>
        </authorList>
    </citation>
    <scope>NUCLEOTIDE SEQUENCE [LARGE SCALE GENOMIC DNA]</scope>
    <source>
        <strain>S19</strain>
    </source>
</reference>